<feature type="chain" id="PRO_0000254559" description="WW domain-containing adapter protein with coiled-coil">
    <location>
        <begin position="1"/>
        <end position="646"/>
    </location>
</feature>
<feature type="domain" description="WW" evidence="3">
    <location>
        <begin position="129"/>
        <end position="162"/>
    </location>
</feature>
<feature type="region of interest" description="Disordered" evidence="4">
    <location>
        <begin position="1"/>
        <end position="138"/>
    </location>
</feature>
<feature type="region of interest" description="Disordered" evidence="4">
    <location>
        <begin position="158"/>
        <end position="352"/>
    </location>
</feature>
<feature type="region of interest" description="Disordered" evidence="4">
    <location>
        <begin position="428"/>
        <end position="541"/>
    </location>
</feature>
<feature type="coiled-coil region" evidence="2">
    <location>
        <begin position="617"/>
        <end position="643"/>
    </location>
</feature>
<feature type="compositionally biased region" description="Polar residues" evidence="4">
    <location>
        <begin position="23"/>
        <end position="37"/>
    </location>
</feature>
<feature type="compositionally biased region" description="Basic and acidic residues" evidence="4">
    <location>
        <begin position="38"/>
        <end position="50"/>
    </location>
</feature>
<feature type="compositionally biased region" description="Polar residues" evidence="4">
    <location>
        <begin position="61"/>
        <end position="75"/>
    </location>
</feature>
<feature type="compositionally biased region" description="Low complexity" evidence="4">
    <location>
        <begin position="103"/>
        <end position="122"/>
    </location>
</feature>
<feature type="compositionally biased region" description="Basic and acidic residues" evidence="4">
    <location>
        <begin position="158"/>
        <end position="174"/>
    </location>
</feature>
<feature type="compositionally biased region" description="Basic and acidic residues" evidence="4">
    <location>
        <begin position="182"/>
        <end position="191"/>
    </location>
</feature>
<feature type="compositionally biased region" description="Polar residues" evidence="4">
    <location>
        <begin position="211"/>
        <end position="225"/>
    </location>
</feature>
<feature type="compositionally biased region" description="Basic and acidic residues" evidence="4">
    <location>
        <begin position="226"/>
        <end position="239"/>
    </location>
</feature>
<feature type="compositionally biased region" description="Low complexity" evidence="4">
    <location>
        <begin position="252"/>
        <end position="267"/>
    </location>
</feature>
<feature type="compositionally biased region" description="Polar residues" evidence="4">
    <location>
        <begin position="284"/>
        <end position="300"/>
    </location>
</feature>
<feature type="compositionally biased region" description="Polar residues" evidence="4">
    <location>
        <begin position="316"/>
        <end position="331"/>
    </location>
</feature>
<feature type="compositionally biased region" description="Low complexity" evidence="4">
    <location>
        <begin position="332"/>
        <end position="351"/>
    </location>
</feature>
<feature type="compositionally biased region" description="Polar residues" evidence="4">
    <location>
        <begin position="428"/>
        <end position="463"/>
    </location>
</feature>
<feature type="compositionally biased region" description="Polar residues" evidence="4">
    <location>
        <begin position="490"/>
        <end position="503"/>
    </location>
</feature>
<feature type="compositionally biased region" description="Low complexity" evidence="4">
    <location>
        <begin position="511"/>
        <end position="524"/>
    </location>
</feature>
<feature type="compositionally biased region" description="Polar residues" evidence="4">
    <location>
        <begin position="528"/>
        <end position="541"/>
    </location>
</feature>
<feature type="modified residue" description="Phosphoserine" evidence="1">
    <location>
        <position position="53"/>
    </location>
</feature>
<feature type="modified residue" description="Phosphoserine" evidence="1">
    <location>
        <position position="131"/>
    </location>
</feature>
<feature type="modified residue" description="Phosphoserine" evidence="1">
    <location>
        <position position="142"/>
    </location>
</feature>
<feature type="modified residue" description="Phosphoserine" evidence="1">
    <location>
        <position position="225"/>
    </location>
</feature>
<feature type="modified residue" description="Phosphothreonine" evidence="1">
    <location>
        <position position="293"/>
    </location>
</feature>
<feature type="modified residue" description="N6-acetyllysine" evidence="1">
    <location>
        <position position="302"/>
    </location>
</feature>
<feature type="modified residue" description="Phosphoserine" evidence="1">
    <location>
        <position position="446"/>
    </location>
</feature>
<feature type="modified residue" description="Phosphothreonine" evidence="1">
    <location>
        <position position="471"/>
    </location>
</feature>
<feature type="modified residue" description="Phosphoserine" evidence="1">
    <location>
        <position position="511"/>
    </location>
</feature>
<feature type="modified residue" description="Phosphoserine" evidence="1">
    <location>
        <position position="523"/>
    </location>
</feature>
<feature type="modified residue" description="Phosphoserine" evidence="1">
    <location>
        <position position="525"/>
    </location>
</feature>
<feature type="splice variant" id="VSP_021237" description="In isoform 2." evidence="7">
    <location>
        <begin position="1"/>
        <end position="45"/>
    </location>
</feature>
<feature type="splice variant" id="VSP_021238" description="In isoform 3." evidence="6">
    <original>MEDKHSSDASSLLPQNILSQTSRHNDKDYRLPRAETHSSSTPVQHPIKPVVHPTATPSTVPSSPFTLQSDHQPKKSFDANGASTLSKLPTPTASLPAQKTERKE</original>
    <variation>K</variation>
    <location>
        <begin position="204"/>
        <end position="307"/>
    </location>
</feature>
<feature type="sequence conflict" description="In Ref. 3; BAC40017." evidence="8" ref="3">
    <original>S</original>
    <variation>F</variation>
    <location>
        <position position="265"/>
    </location>
</feature>
<feature type="sequence conflict" description="In Ref. 1; AAK73808." evidence="8" ref="1">
    <original>S</original>
    <variation>P</variation>
    <location>
        <position position="334"/>
    </location>
</feature>
<feature type="sequence conflict" description="In Ref. 4; AAH80851." evidence="8" ref="4">
    <original>P</original>
    <variation>S</variation>
    <location>
        <position position="509"/>
    </location>
</feature>
<sequence>MVMYARKQQRLSDGCHDRRGDSQPFQALKYSSKSHPSSGDHRHEKMRDAADPSPPNKMLRRSNSPENKYSDSTGHNKAKNVHTQRVRERDGGTSYSPQENSHNHSALHSSNSHSSNPSNNPSKTSDAPYDSADDWSEHISSSGKKYYYNCRTEVSQWEKPKEWLEREQRQKEANKLAVNSFPKDRDYRREVMQATATSGFTSGMEDKHSSDASSLLPQNILSQTSRHNDKDYRLPRAETHSSSTPVQHPIKPVVHPTATPSTVPSSPFTLQSDHQPKKSFDANGASTLSKLPTPTASLPAQKTERKESAPGDKSISHSCTTPSTSSASGLNPTSAPPTSASAVPVSPVPQSTIPPLLQDPNLFRQLLPALQATLQLNNSNVDISKINEVLTAAVTQASLQSIIHKFLTAGPSAFNITSLISQAAQLSTQAQPSNQSPMSLTSDASSPRSYVSPRISTPQTNTVPMKPLISTPPVSSQPKVSTPVVKQGPVSHSATQQPVTADKQQSHDPVSPRSLQRLSSQRSPSPGPNHTCSSNASTATVVPQNASARPACSLTPTLAAHFNDNLIKHVQGWPADHAEKQASRLREEAHNMGSVHMSEICTELKNLRSLVRVCEIQATLREQRILFLRQQIKELEKLKNQNSFMV</sequence>
<protein>
    <recommendedName>
        <fullName>WW domain-containing adapter protein with coiled-coil</fullName>
    </recommendedName>
</protein>
<name>WAC_MOUSE</name>
<keyword id="KW-0007">Acetylation</keyword>
<keyword id="KW-0025">Alternative splicing</keyword>
<keyword id="KW-0156">Chromatin regulator</keyword>
<keyword id="KW-0175">Coiled coil</keyword>
<keyword id="KW-0539">Nucleus</keyword>
<keyword id="KW-0597">Phosphoprotein</keyword>
<keyword id="KW-1185">Reference proteome</keyword>
<keyword id="KW-0804">Transcription</keyword>
<keyword id="KW-0805">Transcription regulation</keyword>
<proteinExistence type="evidence at protein level"/>
<gene>
    <name type="primary">Wac</name>
    <name type="synonym">Kiaa1844</name>
</gene>
<reference key="1">
    <citation type="journal article" date="2002" name="Genomics">
        <title>WAC, a novel WW domain-containing adapter with a coiled-coil region, is colocalized with splicing factor SC35.</title>
        <authorList>
            <person name="Xu G.M."/>
            <person name="Arnaout M.A."/>
        </authorList>
    </citation>
    <scope>NUCLEOTIDE SEQUENCE [MRNA] (ISOFORM 1)</scope>
    <scope>PHOSPHORYLATION</scope>
    <scope>SUBCELLULAR LOCATION</scope>
    <source>
        <strain>C57BL/6J</strain>
    </source>
</reference>
<reference key="2">
    <citation type="journal article" date="2004" name="DNA Res.">
        <title>Prediction of the coding sequences of mouse homologues of KIAA gene: IV. The complete nucleotide sequences of 500 mouse KIAA-homologous cDNAs identified by screening of terminal sequences of cDNA clones randomly sampled from size-fractionated libraries.</title>
        <authorList>
            <person name="Okazaki N."/>
            <person name="Kikuno R."/>
            <person name="Ohara R."/>
            <person name="Inamoto S."/>
            <person name="Koseki H."/>
            <person name="Hiraoka S."/>
            <person name="Saga Y."/>
            <person name="Seino S."/>
            <person name="Nishimura M."/>
            <person name="Kaisho T."/>
            <person name="Hoshino K."/>
            <person name="Kitamura H."/>
            <person name="Nagase T."/>
            <person name="Ohara O."/>
            <person name="Koga H."/>
        </authorList>
    </citation>
    <scope>NUCLEOTIDE SEQUENCE [LARGE SCALE MRNA] (ISOFORM 3)</scope>
    <source>
        <tissue>Pancreatic islet</tissue>
    </source>
</reference>
<reference key="3">
    <citation type="journal article" date="2005" name="Science">
        <title>The transcriptional landscape of the mammalian genome.</title>
        <authorList>
            <person name="Carninci P."/>
            <person name="Kasukawa T."/>
            <person name="Katayama S."/>
            <person name="Gough J."/>
            <person name="Frith M.C."/>
            <person name="Maeda N."/>
            <person name="Oyama R."/>
            <person name="Ravasi T."/>
            <person name="Lenhard B."/>
            <person name="Wells C."/>
            <person name="Kodzius R."/>
            <person name="Shimokawa K."/>
            <person name="Bajic V.B."/>
            <person name="Brenner S.E."/>
            <person name="Batalov S."/>
            <person name="Forrest A.R."/>
            <person name="Zavolan M."/>
            <person name="Davis M.J."/>
            <person name="Wilming L.G."/>
            <person name="Aidinis V."/>
            <person name="Allen J.E."/>
            <person name="Ambesi-Impiombato A."/>
            <person name="Apweiler R."/>
            <person name="Aturaliya R.N."/>
            <person name="Bailey T.L."/>
            <person name="Bansal M."/>
            <person name="Baxter L."/>
            <person name="Beisel K.W."/>
            <person name="Bersano T."/>
            <person name="Bono H."/>
            <person name="Chalk A.M."/>
            <person name="Chiu K.P."/>
            <person name="Choudhary V."/>
            <person name="Christoffels A."/>
            <person name="Clutterbuck D.R."/>
            <person name="Crowe M.L."/>
            <person name="Dalla E."/>
            <person name="Dalrymple B.P."/>
            <person name="de Bono B."/>
            <person name="Della Gatta G."/>
            <person name="di Bernardo D."/>
            <person name="Down T."/>
            <person name="Engstrom P."/>
            <person name="Fagiolini M."/>
            <person name="Faulkner G."/>
            <person name="Fletcher C.F."/>
            <person name="Fukushima T."/>
            <person name="Furuno M."/>
            <person name="Futaki S."/>
            <person name="Gariboldi M."/>
            <person name="Georgii-Hemming P."/>
            <person name="Gingeras T.R."/>
            <person name="Gojobori T."/>
            <person name="Green R.E."/>
            <person name="Gustincich S."/>
            <person name="Harbers M."/>
            <person name="Hayashi Y."/>
            <person name="Hensch T.K."/>
            <person name="Hirokawa N."/>
            <person name="Hill D."/>
            <person name="Huminiecki L."/>
            <person name="Iacono M."/>
            <person name="Ikeo K."/>
            <person name="Iwama A."/>
            <person name="Ishikawa T."/>
            <person name="Jakt M."/>
            <person name="Kanapin A."/>
            <person name="Katoh M."/>
            <person name="Kawasawa Y."/>
            <person name="Kelso J."/>
            <person name="Kitamura H."/>
            <person name="Kitano H."/>
            <person name="Kollias G."/>
            <person name="Krishnan S.P."/>
            <person name="Kruger A."/>
            <person name="Kummerfeld S.K."/>
            <person name="Kurochkin I.V."/>
            <person name="Lareau L.F."/>
            <person name="Lazarevic D."/>
            <person name="Lipovich L."/>
            <person name="Liu J."/>
            <person name="Liuni S."/>
            <person name="McWilliam S."/>
            <person name="Madan Babu M."/>
            <person name="Madera M."/>
            <person name="Marchionni L."/>
            <person name="Matsuda H."/>
            <person name="Matsuzawa S."/>
            <person name="Miki H."/>
            <person name="Mignone F."/>
            <person name="Miyake S."/>
            <person name="Morris K."/>
            <person name="Mottagui-Tabar S."/>
            <person name="Mulder N."/>
            <person name="Nakano N."/>
            <person name="Nakauchi H."/>
            <person name="Ng P."/>
            <person name="Nilsson R."/>
            <person name="Nishiguchi S."/>
            <person name="Nishikawa S."/>
            <person name="Nori F."/>
            <person name="Ohara O."/>
            <person name="Okazaki Y."/>
            <person name="Orlando V."/>
            <person name="Pang K.C."/>
            <person name="Pavan W.J."/>
            <person name="Pavesi G."/>
            <person name="Pesole G."/>
            <person name="Petrovsky N."/>
            <person name="Piazza S."/>
            <person name="Reed J."/>
            <person name="Reid J.F."/>
            <person name="Ring B.Z."/>
            <person name="Ringwald M."/>
            <person name="Rost B."/>
            <person name="Ruan Y."/>
            <person name="Salzberg S.L."/>
            <person name="Sandelin A."/>
            <person name="Schneider C."/>
            <person name="Schoenbach C."/>
            <person name="Sekiguchi K."/>
            <person name="Semple C.A."/>
            <person name="Seno S."/>
            <person name="Sessa L."/>
            <person name="Sheng Y."/>
            <person name="Shibata Y."/>
            <person name="Shimada H."/>
            <person name="Shimada K."/>
            <person name="Silva D."/>
            <person name="Sinclair B."/>
            <person name="Sperling S."/>
            <person name="Stupka E."/>
            <person name="Sugiura K."/>
            <person name="Sultana R."/>
            <person name="Takenaka Y."/>
            <person name="Taki K."/>
            <person name="Tammoja K."/>
            <person name="Tan S.L."/>
            <person name="Tang S."/>
            <person name="Taylor M.S."/>
            <person name="Tegner J."/>
            <person name="Teichmann S.A."/>
            <person name="Ueda H.R."/>
            <person name="van Nimwegen E."/>
            <person name="Verardo R."/>
            <person name="Wei C.L."/>
            <person name="Yagi K."/>
            <person name="Yamanishi H."/>
            <person name="Zabarovsky E."/>
            <person name="Zhu S."/>
            <person name="Zimmer A."/>
            <person name="Hide W."/>
            <person name="Bult C."/>
            <person name="Grimmond S.M."/>
            <person name="Teasdale R.D."/>
            <person name="Liu E.T."/>
            <person name="Brusic V."/>
            <person name="Quackenbush J."/>
            <person name="Wahlestedt C."/>
            <person name="Mattick J.S."/>
            <person name="Hume D.A."/>
            <person name="Kai C."/>
            <person name="Sasaki D."/>
            <person name="Tomaru Y."/>
            <person name="Fukuda S."/>
            <person name="Kanamori-Katayama M."/>
            <person name="Suzuki M."/>
            <person name="Aoki J."/>
            <person name="Arakawa T."/>
            <person name="Iida J."/>
            <person name="Imamura K."/>
            <person name="Itoh M."/>
            <person name="Kato T."/>
            <person name="Kawaji H."/>
            <person name="Kawagashira N."/>
            <person name="Kawashima T."/>
            <person name="Kojima M."/>
            <person name="Kondo S."/>
            <person name="Konno H."/>
            <person name="Nakano K."/>
            <person name="Ninomiya N."/>
            <person name="Nishio T."/>
            <person name="Okada M."/>
            <person name="Plessy C."/>
            <person name="Shibata K."/>
            <person name="Shiraki T."/>
            <person name="Suzuki S."/>
            <person name="Tagami M."/>
            <person name="Waki K."/>
            <person name="Watahiki A."/>
            <person name="Okamura-Oho Y."/>
            <person name="Suzuki H."/>
            <person name="Kawai J."/>
            <person name="Hayashizaki Y."/>
        </authorList>
    </citation>
    <scope>NUCLEOTIDE SEQUENCE [LARGE SCALE MRNA] (ISOFORM 2)</scope>
    <source>
        <strain>C57BL/6J</strain>
        <strain>NOD</strain>
        <tissue>Ovary</tissue>
        <tissue>Retina</tissue>
        <tissue>Spleen</tissue>
    </source>
</reference>
<reference key="4">
    <citation type="journal article" date="2004" name="Genome Res.">
        <title>The status, quality, and expansion of the NIH full-length cDNA project: the Mammalian Gene Collection (MGC).</title>
        <authorList>
            <consortium name="The MGC Project Team"/>
        </authorList>
    </citation>
    <scope>NUCLEOTIDE SEQUENCE [LARGE SCALE MRNA] (ISOFORM 1)</scope>
    <source>
        <strain>C57BL/6J</strain>
        <tissue>Brain</tissue>
    </source>
</reference>
<reference key="5">
    <citation type="journal article" date="2007" name="Proc. Natl. Acad. Sci. U.S.A.">
        <title>Large-scale phosphorylation analysis of mouse liver.</title>
        <authorList>
            <person name="Villen J."/>
            <person name="Beausoleil S.A."/>
            <person name="Gerber S.A."/>
            <person name="Gygi S.P."/>
        </authorList>
    </citation>
    <scope>IDENTIFICATION BY MASS SPECTROMETRY [LARGE SCALE ANALYSIS]</scope>
    <source>
        <tissue>Liver</tissue>
    </source>
</reference>
<reference key="6">
    <citation type="journal article" date="2010" name="Cell">
        <title>A tissue-specific atlas of mouse protein phosphorylation and expression.</title>
        <authorList>
            <person name="Huttlin E.L."/>
            <person name="Jedrychowski M.P."/>
            <person name="Elias J.E."/>
            <person name="Goswami T."/>
            <person name="Rad R."/>
            <person name="Beausoleil S.A."/>
            <person name="Villen J."/>
            <person name="Haas W."/>
            <person name="Sowa M.E."/>
            <person name="Gygi S.P."/>
        </authorList>
    </citation>
    <scope>IDENTIFICATION BY MASS SPECTROMETRY [LARGE SCALE ANALYSIS]</scope>
    <source>
        <tissue>Brain</tissue>
        <tissue>Brown adipose tissue</tissue>
        <tissue>Kidney</tissue>
        <tissue>Lung</tissue>
        <tissue>Pancreas</tissue>
        <tissue>Spleen</tissue>
    </source>
</reference>
<dbReference type="EMBL" id="AF320996">
    <property type="protein sequence ID" value="AAK73808.1"/>
    <property type="molecule type" value="mRNA"/>
</dbReference>
<dbReference type="EMBL" id="AK173274">
    <property type="protein sequence ID" value="BAD32552.1"/>
    <property type="status" value="ALT_INIT"/>
    <property type="molecule type" value="mRNA"/>
</dbReference>
<dbReference type="EMBL" id="AK044675">
    <property type="protein sequence ID" value="BAC32029.1"/>
    <property type="molecule type" value="mRNA"/>
</dbReference>
<dbReference type="EMBL" id="AK087826">
    <property type="protein sequence ID" value="BAC40017.1"/>
    <property type="molecule type" value="mRNA"/>
</dbReference>
<dbReference type="EMBL" id="AK156780">
    <property type="protein sequence ID" value="BAE33852.1"/>
    <property type="molecule type" value="mRNA"/>
</dbReference>
<dbReference type="EMBL" id="BC080851">
    <property type="protein sequence ID" value="AAH80851.1"/>
    <property type="molecule type" value="mRNA"/>
</dbReference>
<dbReference type="CCDS" id="CCDS29046.1">
    <molecule id="Q924H7-1"/>
</dbReference>
<dbReference type="CCDS" id="CCDS50218.1">
    <molecule id="Q924H7-3"/>
</dbReference>
<dbReference type="CCDS" id="CCDS70869.1">
    <molecule id="Q924H7-2"/>
</dbReference>
<dbReference type="RefSeq" id="NP_001139770.1">
    <molecule id="Q924H7-3"/>
    <property type="nucleotide sequence ID" value="NM_001146298.2"/>
</dbReference>
<dbReference type="RefSeq" id="NP_001269022.1">
    <molecule id="Q924H7-2"/>
    <property type="nucleotide sequence ID" value="NM_001282093.1"/>
</dbReference>
<dbReference type="RefSeq" id="NP_001347885.1">
    <molecule id="Q924H7-2"/>
    <property type="nucleotide sequence ID" value="NM_001360956.1"/>
</dbReference>
<dbReference type="RefSeq" id="NP_694725.3">
    <molecule id="Q924H7-1"/>
    <property type="nucleotide sequence ID" value="NM_153085.4"/>
</dbReference>
<dbReference type="RefSeq" id="XP_006525868.1">
    <property type="nucleotide sequence ID" value="XM_006525805.2"/>
</dbReference>
<dbReference type="RefSeq" id="XP_011245190.1">
    <molecule id="Q924H7-2"/>
    <property type="nucleotide sequence ID" value="XM_011246888.3"/>
</dbReference>
<dbReference type="SMR" id="Q924H7"/>
<dbReference type="BioGRID" id="230359">
    <property type="interactions" value="2"/>
</dbReference>
<dbReference type="FunCoup" id="Q924H7">
    <property type="interactions" value="5946"/>
</dbReference>
<dbReference type="STRING" id="10090.ENSMUSP00000132117"/>
<dbReference type="GlyGen" id="Q924H7">
    <property type="glycosylation" value="3 sites, 1 O-linked glycan (1 site)"/>
</dbReference>
<dbReference type="iPTMnet" id="Q924H7"/>
<dbReference type="PhosphoSitePlus" id="Q924H7"/>
<dbReference type="jPOST" id="Q924H7"/>
<dbReference type="PaxDb" id="10090-ENSMUSP00000132117"/>
<dbReference type="PeptideAtlas" id="Q924H7"/>
<dbReference type="ProteomicsDB" id="275196">
    <molecule id="Q924H7-1"/>
</dbReference>
<dbReference type="ProteomicsDB" id="275197">
    <molecule id="Q924H7-2"/>
</dbReference>
<dbReference type="ProteomicsDB" id="275198">
    <molecule id="Q924H7-3"/>
</dbReference>
<dbReference type="Pumba" id="Q924H7"/>
<dbReference type="Antibodypedia" id="50013">
    <property type="antibodies" value="123 antibodies from 26 providers"/>
</dbReference>
<dbReference type="DNASU" id="225131"/>
<dbReference type="Ensembl" id="ENSMUST00000074919.11">
    <molecule id="Q924H7-2"/>
    <property type="protein sequence ID" value="ENSMUSP00000074454.5"/>
    <property type="gene ID" value="ENSMUSG00000024283.16"/>
</dbReference>
<dbReference type="Ensembl" id="ENSMUST00000092112.11">
    <molecule id="Q924H7-3"/>
    <property type="protein sequence ID" value="ENSMUSP00000089746.5"/>
    <property type="gene ID" value="ENSMUSG00000024283.16"/>
</dbReference>
<dbReference type="Ensembl" id="ENSMUST00000167020.8">
    <molecule id="Q924H7-1"/>
    <property type="protein sequence ID" value="ENSMUSP00000132117.2"/>
    <property type="gene ID" value="ENSMUSG00000024283.16"/>
</dbReference>
<dbReference type="GeneID" id="225131"/>
<dbReference type="KEGG" id="mmu:225131"/>
<dbReference type="UCSC" id="uc008eab.3">
    <molecule id="Q924H7-1"/>
    <property type="organism name" value="mouse"/>
</dbReference>
<dbReference type="UCSC" id="uc008eae.3">
    <molecule id="Q924H7-3"/>
    <property type="organism name" value="mouse"/>
</dbReference>
<dbReference type="AGR" id="MGI:2387357"/>
<dbReference type="CTD" id="51322"/>
<dbReference type="MGI" id="MGI:2387357">
    <property type="gene designation" value="Wac"/>
</dbReference>
<dbReference type="VEuPathDB" id="HostDB:ENSMUSG00000024283"/>
<dbReference type="eggNOG" id="KOG0152">
    <property type="taxonomic scope" value="Eukaryota"/>
</dbReference>
<dbReference type="GeneTree" id="ENSGT00440000037780"/>
<dbReference type="HOGENOM" id="CLU_024845_2_1_1"/>
<dbReference type="InParanoid" id="Q924H7"/>
<dbReference type="OMA" id="FEPADDW"/>
<dbReference type="OrthoDB" id="10072039at2759"/>
<dbReference type="PhylomeDB" id="Q924H7"/>
<dbReference type="TreeFam" id="TF328635"/>
<dbReference type="Reactome" id="R-MMU-8866654">
    <property type="pathway name" value="E3 ubiquitin ligases ubiquitinate target proteins"/>
</dbReference>
<dbReference type="BioGRID-ORCS" id="225131">
    <property type="hits" value="25 hits in 80 CRISPR screens"/>
</dbReference>
<dbReference type="ChiTaRS" id="Wac">
    <property type="organism name" value="mouse"/>
</dbReference>
<dbReference type="PRO" id="PR:Q924H7"/>
<dbReference type="Proteomes" id="UP000000589">
    <property type="component" value="Chromosome 18"/>
</dbReference>
<dbReference type="RNAct" id="Q924H7">
    <property type="molecule type" value="protein"/>
</dbReference>
<dbReference type="Bgee" id="ENSMUSG00000024283">
    <property type="expression patterns" value="Expressed in undifferentiated genital tubercle and 257 other cell types or tissues"/>
</dbReference>
<dbReference type="ExpressionAtlas" id="Q924H7">
    <property type="expression patterns" value="baseline and differential"/>
</dbReference>
<dbReference type="GO" id="GO:0016607">
    <property type="term" value="C:nuclear speck"/>
    <property type="evidence" value="ECO:0007669"/>
    <property type="project" value="UniProtKB-SubCell"/>
</dbReference>
<dbReference type="GO" id="GO:0005681">
    <property type="term" value="C:spliceosomal complex"/>
    <property type="evidence" value="ECO:0000314"/>
    <property type="project" value="MGI"/>
</dbReference>
<dbReference type="GO" id="GO:0003682">
    <property type="term" value="F:chromatin binding"/>
    <property type="evidence" value="ECO:0000250"/>
    <property type="project" value="UniProtKB"/>
</dbReference>
<dbReference type="GO" id="GO:0000993">
    <property type="term" value="F:RNA polymerase II complex binding"/>
    <property type="evidence" value="ECO:0000250"/>
    <property type="project" value="UniProtKB"/>
</dbReference>
<dbReference type="GO" id="GO:0006338">
    <property type="term" value="P:chromatin remodeling"/>
    <property type="evidence" value="ECO:0000250"/>
    <property type="project" value="UniProtKB"/>
</dbReference>
<dbReference type="GO" id="GO:0006974">
    <property type="term" value="P:DNA damage response"/>
    <property type="evidence" value="ECO:0000250"/>
    <property type="project" value="UniProtKB"/>
</dbReference>
<dbReference type="GO" id="GO:0031571">
    <property type="term" value="P:mitotic G1 DNA damage checkpoint signaling"/>
    <property type="evidence" value="ECO:0000250"/>
    <property type="project" value="UniProtKB"/>
</dbReference>
<dbReference type="GO" id="GO:0032435">
    <property type="term" value="P:negative regulation of proteasomal ubiquitin-dependent protein catabolic process"/>
    <property type="evidence" value="ECO:0007669"/>
    <property type="project" value="Ensembl"/>
</dbReference>
<dbReference type="GO" id="GO:0045893">
    <property type="term" value="P:positive regulation of DNA-templated transcription"/>
    <property type="evidence" value="ECO:0000250"/>
    <property type="project" value="UniProtKB"/>
</dbReference>
<dbReference type="GO" id="GO:0016239">
    <property type="term" value="P:positive regulation of macroautophagy"/>
    <property type="evidence" value="ECO:0007669"/>
    <property type="project" value="Ensembl"/>
</dbReference>
<dbReference type="CDD" id="cd00201">
    <property type="entry name" value="WW"/>
    <property type="match status" value="1"/>
</dbReference>
<dbReference type="FunFam" id="2.20.70.10:FF:000020">
    <property type="entry name" value="WW domain-containing adapter protein with coiled-coil isoform X1"/>
    <property type="match status" value="1"/>
</dbReference>
<dbReference type="Gene3D" id="2.20.70.10">
    <property type="match status" value="1"/>
</dbReference>
<dbReference type="InterPro" id="IPR038867">
    <property type="entry name" value="WAC"/>
</dbReference>
<dbReference type="InterPro" id="IPR001202">
    <property type="entry name" value="WW_dom"/>
</dbReference>
<dbReference type="InterPro" id="IPR036020">
    <property type="entry name" value="WW_dom_sf"/>
</dbReference>
<dbReference type="PANTHER" id="PTHR15911">
    <property type="entry name" value="WW DOMAIN-CONTAINING ADAPTER PROTEIN WITH COILED-COIL"/>
    <property type="match status" value="1"/>
</dbReference>
<dbReference type="PANTHER" id="PTHR15911:SF6">
    <property type="entry name" value="WW DOMAIN-CONTAINING ADAPTER PROTEIN WITH COILED-COIL"/>
    <property type="match status" value="1"/>
</dbReference>
<dbReference type="Pfam" id="PF00397">
    <property type="entry name" value="WW"/>
    <property type="match status" value="1"/>
</dbReference>
<dbReference type="SMART" id="SM00456">
    <property type="entry name" value="WW"/>
    <property type="match status" value="1"/>
</dbReference>
<dbReference type="SUPFAM" id="SSF51045">
    <property type="entry name" value="WW domain"/>
    <property type="match status" value="1"/>
</dbReference>
<dbReference type="PROSITE" id="PS01159">
    <property type="entry name" value="WW_DOMAIN_1"/>
    <property type="match status" value="1"/>
</dbReference>
<dbReference type="PROSITE" id="PS50020">
    <property type="entry name" value="WW_DOMAIN_2"/>
    <property type="match status" value="1"/>
</dbReference>
<evidence type="ECO:0000250" key="1">
    <source>
        <dbReference type="UniProtKB" id="Q9BTA9"/>
    </source>
</evidence>
<evidence type="ECO:0000255" key="2"/>
<evidence type="ECO:0000255" key="3">
    <source>
        <dbReference type="PROSITE-ProRule" id="PRU00224"/>
    </source>
</evidence>
<evidence type="ECO:0000256" key="4">
    <source>
        <dbReference type="SAM" id="MobiDB-lite"/>
    </source>
</evidence>
<evidence type="ECO:0000269" key="5">
    <source>
    </source>
</evidence>
<evidence type="ECO:0000303" key="6">
    <source>
    </source>
</evidence>
<evidence type="ECO:0000303" key="7">
    <source>
    </source>
</evidence>
<evidence type="ECO:0000305" key="8"/>
<organism>
    <name type="scientific">Mus musculus</name>
    <name type="common">Mouse</name>
    <dbReference type="NCBI Taxonomy" id="10090"/>
    <lineage>
        <taxon>Eukaryota</taxon>
        <taxon>Metazoa</taxon>
        <taxon>Chordata</taxon>
        <taxon>Craniata</taxon>
        <taxon>Vertebrata</taxon>
        <taxon>Euteleostomi</taxon>
        <taxon>Mammalia</taxon>
        <taxon>Eutheria</taxon>
        <taxon>Euarchontoglires</taxon>
        <taxon>Glires</taxon>
        <taxon>Rodentia</taxon>
        <taxon>Myomorpha</taxon>
        <taxon>Muroidea</taxon>
        <taxon>Muridae</taxon>
        <taxon>Murinae</taxon>
        <taxon>Mus</taxon>
        <taxon>Mus</taxon>
    </lineage>
</organism>
<accession>Q924H7</accession>
<accession>Q3U0K1</accession>
<accession>Q66JM9</accession>
<accession>Q69Z92</accession>
<accession>Q8C2W2</accession>
<accession>Q8C8Q8</accession>
<comment type="function">
    <text evidence="1">Acts as a linker between gene transcription and histone H2B monoubiquitination at 'Lys-120' (H2BK120ub1). Interacts with the RNA polymerase II transcriptional machinery via its WW domain and with RNF20-RNF40 via its coiled coil region, thereby linking and regulating H2BK120ub1 and gene transcription. Regulates the cell-cycle checkpoint activation in response to DNA damage. Positive regulator of amino acid starvation-induced autophagy. Also acts as a negative regulator of basal autophagy. Positively regulates MTOR activity by promoting, in an energy-dependent manner, the assembly of the TTT complex composed of TELO2, TTI1 and TTI2 and the RUVBL complex composed of RUVBL1 and RUVBL2 into the TTT-RUVBL complex. This leads to the dimerization of the mTORC1 complex and its subsequent activation. May negatively regulate the ubiquitin proteasome pathway.</text>
</comment>
<comment type="subunit">
    <text evidence="1">Interacts (via coiled coil domain) with RNF20, RNF40 and UBE2A. Interacts (via WW domain) with RNA polymerase II. Interacts with MTOR and other components of the MTOR pathway including RPTOR, RUVBL1, RUVBL2, TTI1 and TTI2.</text>
</comment>
<comment type="subcellular location">
    <subcellularLocation>
        <location evidence="5">Nucleus speckle</location>
    </subcellularLocation>
    <subcellularLocation>
        <location evidence="1">Nucleus</location>
    </subcellularLocation>
    <text>In distinct nuclear speckles. Colocalizes with pre-mRNA processing complexes.</text>
</comment>
<comment type="alternative products">
    <event type="alternative splicing"/>
    <isoform>
        <id>Q924H7-1</id>
        <name>1</name>
        <sequence type="displayed"/>
    </isoform>
    <isoform>
        <id>Q924H7-2</id>
        <name>2</name>
        <sequence type="described" ref="VSP_021237"/>
    </isoform>
    <isoform>
        <id>Q924H7-3</id>
        <name>3</name>
        <sequence type="described" ref="VSP_021238"/>
    </isoform>
</comment>
<comment type="PTM">
    <text evidence="5">Phosphorylated on tyrosine residues.</text>
</comment>
<comment type="sequence caution" evidence="8">
    <conflict type="erroneous initiation">
        <sequence resource="EMBL-CDS" id="BAD32552"/>
    </conflict>
    <text>Extended N-terminus.</text>
</comment>